<keyword id="KW-0167">Capsid protein</keyword>
<keyword id="KW-0694">RNA-binding</keyword>
<keyword id="KW-1142">T=3 icosahedral capsid protein</keyword>
<keyword id="KW-0946">Virion</keyword>
<organismHost>
    <name type="scientific">Chenopodium amaranticolor</name>
    <dbReference type="NCBI Taxonomy" id="66262"/>
</organismHost>
<organismHost>
    <name type="scientific">Chenopodium quinoa</name>
    <name type="common">Quinoa</name>
    <dbReference type="NCBI Taxonomy" id="63459"/>
</organismHost>
<organismHost>
    <name type="scientific">Cucumis sativus</name>
    <name type="common">Cucumber</name>
    <dbReference type="NCBI Taxonomy" id="3659"/>
</organismHost>
<organismHost>
    <name type="scientific">Nicotiana clevelandii</name>
    <name type="common">Wild tobacco</name>
    <dbReference type="NCBI Taxonomy" id="81866"/>
</organismHost>
<organismHost>
    <name type="scientific">Nicotiana tabacum</name>
    <name type="common">Common tobacco</name>
    <dbReference type="NCBI Taxonomy" id="4097"/>
</organismHost>
<organismHost>
    <name type="scientific">Phaseolus vulgaris</name>
    <name type="common">Kidney bean</name>
    <name type="synonym">French bean</name>
    <dbReference type="NCBI Taxonomy" id="3885"/>
</organismHost>
<organismHost>
    <name type="scientific">Tulipa gesneriana</name>
    <name type="common">Garden tulip</name>
    <dbReference type="NCBI Taxonomy" id="13306"/>
</organismHost>
<feature type="chain" id="PRO_0000222870" description="Capsid protein">
    <location>
        <begin position="1"/>
        <end position="268"/>
    </location>
</feature>
<feature type="region of interest" description="R domain, interaction with RNA">
    <location>
        <begin position="1"/>
        <end position="77"/>
    </location>
</feature>
<feature type="region of interest" description="Disordered" evidence="1">
    <location>
        <begin position="1"/>
        <end position="21"/>
    </location>
</feature>
<feature type="region of interest" description="S domain, virion shell">
    <location>
        <begin position="78"/>
        <end position="258"/>
    </location>
</feature>
<feature type="region of interest" description="P domain, projecting">
    <location>
        <begin position="259"/>
        <end position="268"/>
    </location>
</feature>
<evidence type="ECO:0000256" key="1">
    <source>
        <dbReference type="SAM" id="MobiDB-lite"/>
    </source>
</evidence>
<evidence type="ECO:0000305" key="2"/>
<comment type="function">
    <text>Capsid protein self-assembles to form an icosahedral capsid with a T=3 symmetry, about 28 nm in diameter, and consisting of 180 capsid proteins.</text>
</comment>
<comment type="subunit">
    <text evidence="2">Homomultimer.</text>
</comment>
<comment type="subcellular location">
    <subcellularLocation>
        <location evidence="2">Virion</location>
    </subcellularLocation>
</comment>
<comment type="similarity">
    <text evidence="2">Belongs to the icosahedral plant coat protein family.</text>
</comment>
<gene>
    <name type="ORF">ORF4</name>
</gene>
<protein>
    <recommendedName>
        <fullName>Capsid protein</fullName>
    </recommendedName>
    <alternativeName>
        <fullName>p30</fullName>
    </alternativeName>
</protein>
<sequence>MPKRGRVGLAESFQSKTKKQKENEYNAFQREKMERALANNARAAPKSSGMTFRPLTVPVAGSVIYSRPRVPQVRTNQMSTFVVNTELVANITLAAAGAFSFTTQPLIPSFGSWLANIADLYSKWRWISCSVVYIPKCPTSTQGSVVMAIVYDAQDTVPTTRTQVSQCYQSITFPPYAGYGGASALNHKGSGGESLVSTLDTNRVDKRWYSTIGNAAFTALTSIDKNQFCPATAIIAGDGGPAAATAVGDIFMRYDIEFIEPVNPSINV</sequence>
<dbReference type="EMBL" id="D00942">
    <property type="protein sequence ID" value="BAA00790.1"/>
    <property type="molecule type" value="Genomic_RNA"/>
</dbReference>
<dbReference type="PIR" id="JU0371">
    <property type="entry name" value="VCWQTD"/>
</dbReference>
<dbReference type="SMR" id="P27210"/>
<dbReference type="GO" id="GO:0039617">
    <property type="term" value="C:T=3 icosahedral viral capsid"/>
    <property type="evidence" value="ECO:0007669"/>
    <property type="project" value="UniProtKB-KW"/>
</dbReference>
<dbReference type="GO" id="GO:0003723">
    <property type="term" value="F:RNA binding"/>
    <property type="evidence" value="ECO:0007669"/>
    <property type="project" value="UniProtKB-KW"/>
</dbReference>
<dbReference type="GO" id="GO:0005198">
    <property type="term" value="F:structural molecule activity"/>
    <property type="evidence" value="ECO:0007669"/>
    <property type="project" value="InterPro"/>
</dbReference>
<dbReference type="Gene3D" id="2.60.120.20">
    <property type="match status" value="1"/>
</dbReference>
<dbReference type="InterPro" id="IPR000937">
    <property type="entry name" value="Capsid_prot_S-dom_vir"/>
</dbReference>
<dbReference type="InterPro" id="IPR029053">
    <property type="entry name" value="Viral_coat"/>
</dbReference>
<dbReference type="Pfam" id="PF00729">
    <property type="entry name" value="Viral_coat"/>
    <property type="match status" value="1"/>
</dbReference>
<dbReference type="PRINTS" id="PR00233">
    <property type="entry name" value="ICOSAHEDRAL"/>
</dbReference>
<dbReference type="SUPFAM" id="SSF88633">
    <property type="entry name" value="Positive stranded ssRNA viruses"/>
    <property type="match status" value="1"/>
</dbReference>
<dbReference type="PROSITE" id="PS00555">
    <property type="entry name" value="ICOSAH_VIR_COAT_S"/>
    <property type="match status" value="1"/>
</dbReference>
<proteinExistence type="inferred from homology"/>
<reference key="1">
    <citation type="journal article" date="1991" name="J. Gen. Virol.">
        <title>The complete nucleotide sequence of tobacco necrosis virus strain D.</title>
        <authorList>
            <person name="Coutts R.H.A."/>
            <person name="Rigden J.E."/>
            <person name="Slabas A.R."/>
            <person name="Lomonossoff G.P."/>
            <person name="Wise P.J."/>
        </authorList>
    </citation>
    <scope>NUCLEOTIDE SEQUENCE [GENOMIC RNA]</scope>
</reference>
<name>CAPSD_TNVD</name>
<organism>
    <name type="scientific">Tobacco necrosis virus (strain D)</name>
    <name type="common">TNV-D</name>
    <dbReference type="NCBI Taxonomy" id="12056"/>
    <lineage>
        <taxon>Viruses</taxon>
        <taxon>Riboviria</taxon>
        <taxon>Orthornavirae</taxon>
        <taxon>Kitrinoviricota</taxon>
        <taxon>Tolucaviricetes</taxon>
        <taxon>Tolivirales</taxon>
        <taxon>Tombusviridae</taxon>
        <taxon>Procedovirinae</taxon>
        <taxon>Betanecrovirus</taxon>
        <taxon>Betanecrovirus nicotianae</taxon>
    </lineage>
</organism>
<accession>P27210</accession>